<protein>
    <recommendedName>
        <fullName evidence="1">Small ribosomal subunit protein bS16</fullName>
    </recommendedName>
    <alternativeName>
        <fullName evidence="2">30S ribosomal protein S16</fullName>
    </alternativeName>
</protein>
<evidence type="ECO:0000255" key="1">
    <source>
        <dbReference type="HAMAP-Rule" id="MF_00385"/>
    </source>
</evidence>
<evidence type="ECO:0000305" key="2"/>
<feature type="chain" id="PRO_1000122597" description="Small ribosomal subunit protein bS16">
    <location>
        <begin position="1"/>
        <end position="104"/>
    </location>
</feature>
<sequence length="104" mass="12094">MAVKIRLARFGAKKRPFYRIVVADSRAPRDGRFIERIGQYDPMLPKDNKNRVVVKADRLKHWLSVGAQATERVMWFIKKGIVDLETESKKIEKKKVEKVQGQEA</sequence>
<dbReference type="EMBL" id="AM999887">
    <property type="protein sequence ID" value="CAQ54633.1"/>
    <property type="molecule type" value="Genomic_DNA"/>
</dbReference>
<dbReference type="RefSeq" id="WP_006015540.1">
    <property type="nucleotide sequence ID" value="NC_010981.1"/>
</dbReference>
<dbReference type="SMR" id="B3CPY0"/>
<dbReference type="KEGG" id="wpi:WP0525"/>
<dbReference type="eggNOG" id="COG0228">
    <property type="taxonomic scope" value="Bacteria"/>
</dbReference>
<dbReference type="HOGENOM" id="CLU_100590_5_2_5"/>
<dbReference type="Proteomes" id="UP000008814">
    <property type="component" value="Chromosome"/>
</dbReference>
<dbReference type="GO" id="GO:0005737">
    <property type="term" value="C:cytoplasm"/>
    <property type="evidence" value="ECO:0007669"/>
    <property type="project" value="UniProtKB-ARBA"/>
</dbReference>
<dbReference type="GO" id="GO:0015935">
    <property type="term" value="C:small ribosomal subunit"/>
    <property type="evidence" value="ECO:0007669"/>
    <property type="project" value="TreeGrafter"/>
</dbReference>
<dbReference type="GO" id="GO:0003735">
    <property type="term" value="F:structural constituent of ribosome"/>
    <property type="evidence" value="ECO:0007669"/>
    <property type="project" value="InterPro"/>
</dbReference>
<dbReference type="GO" id="GO:0006412">
    <property type="term" value="P:translation"/>
    <property type="evidence" value="ECO:0007669"/>
    <property type="project" value="UniProtKB-UniRule"/>
</dbReference>
<dbReference type="Gene3D" id="3.30.1320.10">
    <property type="match status" value="1"/>
</dbReference>
<dbReference type="HAMAP" id="MF_00385">
    <property type="entry name" value="Ribosomal_bS16"/>
    <property type="match status" value="1"/>
</dbReference>
<dbReference type="InterPro" id="IPR000307">
    <property type="entry name" value="Ribosomal_bS16"/>
</dbReference>
<dbReference type="InterPro" id="IPR020592">
    <property type="entry name" value="Ribosomal_bS16_CS"/>
</dbReference>
<dbReference type="InterPro" id="IPR023803">
    <property type="entry name" value="Ribosomal_bS16_dom_sf"/>
</dbReference>
<dbReference type="NCBIfam" id="TIGR00002">
    <property type="entry name" value="S16"/>
    <property type="match status" value="1"/>
</dbReference>
<dbReference type="PANTHER" id="PTHR12919">
    <property type="entry name" value="30S RIBOSOMAL PROTEIN S16"/>
    <property type="match status" value="1"/>
</dbReference>
<dbReference type="PANTHER" id="PTHR12919:SF20">
    <property type="entry name" value="SMALL RIBOSOMAL SUBUNIT PROTEIN BS16M"/>
    <property type="match status" value="1"/>
</dbReference>
<dbReference type="Pfam" id="PF00886">
    <property type="entry name" value="Ribosomal_S16"/>
    <property type="match status" value="1"/>
</dbReference>
<dbReference type="SUPFAM" id="SSF54565">
    <property type="entry name" value="Ribosomal protein S16"/>
    <property type="match status" value="1"/>
</dbReference>
<dbReference type="PROSITE" id="PS00732">
    <property type="entry name" value="RIBOSOMAL_S16"/>
    <property type="match status" value="1"/>
</dbReference>
<reference key="1">
    <citation type="journal article" date="2008" name="Mol. Biol. Evol.">
        <title>Genome evolution of Wolbachia strain wPip from the Culex pipiens group.</title>
        <authorList>
            <person name="Klasson L."/>
            <person name="Walker T."/>
            <person name="Sebaihia M."/>
            <person name="Sanders M.J."/>
            <person name="Quail M.A."/>
            <person name="Lord A."/>
            <person name="Sanders S."/>
            <person name="Earl J."/>
            <person name="O'Neill S.L."/>
            <person name="Thomson N."/>
            <person name="Sinkins S.P."/>
            <person name="Parkhill J."/>
        </authorList>
    </citation>
    <scope>NUCLEOTIDE SEQUENCE [LARGE SCALE GENOMIC DNA]</scope>
    <source>
        <strain>wPip</strain>
    </source>
</reference>
<keyword id="KW-0687">Ribonucleoprotein</keyword>
<keyword id="KW-0689">Ribosomal protein</keyword>
<gene>
    <name evidence="1" type="primary">rpsP</name>
    <name type="ordered locus">WP0525</name>
</gene>
<proteinExistence type="inferred from homology"/>
<accession>B3CPY0</accession>
<comment type="similarity">
    <text evidence="1">Belongs to the bacterial ribosomal protein bS16 family.</text>
</comment>
<organism>
    <name type="scientific">Wolbachia pipientis subsp. Culex pipiens (strain wPip)</name>
    <dbReference type="NCBI Taxonomy" id="570417"/>
    <lineage>
        <taxon>Bacteria</taxon>
        <taxon>Pseudomonadati</taxon>
        <taxon>Pseudomonadota</taxon>
        <taxon>Alphaproteobacteria</taxon>
        <taxon>Rickettsiales</taxon>
        <taxon>Anaplasmataceae</taxon>
        <taxon>Wolbachieae</taxon>
        <taxon>Wolbachia</taxon>
    </lineage>
</organism>
<name>RS16_WOLPP</name>